<gene>
    <name type="primary">KDM5D</name>
    <name type="synonym">HY</name>
    <name type="synonym">HYA</name>
    <name type="synonym">JARID1D</name>
    <name type="synonym">KIAA0234</name>
    <name type="synonym">SMCY</name>
</gene>
<comment type="function">
    <text evidence="8 9 10 12 13 14 15">Histone demethylase that specifically demethylates 'Lys-4' of histone H3, thereby playing a central role in histone code. Does not demethylate histone H3 'Lys-9', H3 'Lys-27', H3 'Lys-36', H3 'Lys-79' or H4 'Lys-20'. Demethylates trimethylated and dimethylated but not monomethylated H3 'Lys-4'. May play a role in spermatogenesis. Involved in transcriptional repression of diverse metastasis-associated genes; in this function seems to cooperate with ZMYND8. Suppresses prostate cancer cell invasion. Regulates androgen receptor (AR) transcriptional activity by demethylating H3K4me3 active transcription marks.</text>
</comment>
<comment type="catalytic activity">
    <reaction evidence="8">
        <text>N(6),N(6),N(6)-trimethyl-L-lysyl(4)-[histone H3] + 3 2-oxoglutarate + 3 O2 = L-lysyl(4)-[histone H3] + 3 formaldehyde + 3 succinate + 3 CO2</text>
        <dbReference type="Rhea" id="RHEA:60208"/>
        <dbReference type="Rhea" id="RHEA-COMP:15537"/>
        <dbReference type="Rhea" id="RHEA-COMP:15547"/>
        <dbReference type="ChEBI" id="CHEBI:15379"/>
        <dbReference type="ChEBI" id="CHEBI:16526"/>
        <dbReference type="ChEBI" id="CHEBI:16810"/>
        <dbReference type="ChEBI" id="CHEBI:16842"/>
        <dbReference type="ChEBI" id="CHEBI:29969"/>
        <dbReference type="ChEBI" id="CHEBI:30031"/>
        <dbReference type="ChEBI" id="CHEBI:61961"/>
        <dbReference type="EC" id="1.14.11.67"/>
    </reaction>
</comment>
<comment type="cofactor">
    <cofactor evidence="9">
        <name>L-ascorbate</name>
        <dbReference type="ChEBI" id="CHEBI:38290"/>
    </cofactor>
</comment>
<comment type="cofactor">
    <cofactor evidence="9">
        <name>Fe(2+)</name>
        <dbReference type="ChEBI" id="CHEBI:29033"/>
    </cofactor>
    <text evidence="9">Binds 1 Fe(2+) ion per subunit.</text>
</comment>
<comment type="biophysicochemical properties">
    <kinetics>
        <KM evidence="14">10 uM for 2-oxoglutarate</KM>
        <KM evidence="14">6.2 uM for histone H3K4me3</KM>
        <text evidence="14">kcat is 2.6 min(-1) and 3.0 min(-1) for 2-oxoglutarate and histone H3K4me3, respectively.</text>
    </kinetics>
</comment>
<comment type="subunit">
    <text evidence="9 11 13 15">Interacts with PCGF6, MSH5, ZMYND8, AR.</text>
</comment>
<comment type="interaction">
    <interactant intactId="EBI-1246860">
        <id>Q9BY66</id>
    </interactant>
    <interactant intactId="EBI-608057">
        <id>P10275</id>
        <label>AR</label>
    </interactant>
    <organismsDiffer>false</organismsDiffer>
    <experiments>2</experiments>
</comment>
<comment type="interaction">
    <interactant intactId="EBI-12559887">
        <id>Q9BY66-3</id>
    </interactant>
    <interactant intactId="EBI-608057">
        <id>P10275</id>
        <label>AR</label>
    </interactant>
    <organismsDiffer>false</organismsDiffer>
    <experiments>2</experiments>
</comment>
<comment type="subcellular location">
    <subcellularLocation>
        <location evidence="13 15 19">Nucleus</location>
    </subcellularLocation>
</comment>
<comment type="alternative products">
    <event type="alternative splicing"/>
    <isoform>
        <id>Q9BY66-1</id>
        <name>1</name>
        <sequence type="displayed"/>
    </isoform>
    <isoform>
        <id>Q9BY66-2</id>
        <name>2</name>
        <sequence type="described" ref="VSP_000317"/>
    </isoform>
    <isoform>
        <id>Q9BY66-3</id>
        <name>3</name>
        <sequence type="described" ref="VSP_043320"/>
    </isoform>
    <text>Additional isoforms seem to exist.</text>
</comment>
<comment type="tissue specificity">
    <text evidence="12">Expression is highly down-regulated in metastatic prostate tumors.</text>
</comment>
<comment type="domain">
    <text>The JmjC domain is required for enzymatic activity.</text>
</comment>
<comment type="miscellaneous">
    <text evidence="13">Involved in sensitivity to docetaxel.</text>
</comment>
<comment type="similarity">
    <text evidence="19">Belongs to the JARID1 histone demethylase family.</text>
</comment>
<comment type="sequence caution" evidence="19">
    <conflict type="erroneous initiation">
        <sequence resource="EMBL-CDS" id="BAA13241"/>
    </conflict>
    <text>Extended N-terminus.</text>
</comment>
<accession>Q9BY66</accession>
<accession>A2RU19</accession>
<accession>A6H8V7</accession>
<accession>B7ZLX1</accession>
<accession>Q92509</accession>
<accession>Q92809</accession>
<accession>Q9HCU1</accession>
<reference key="1">
    <citation type="journal article" date="1996" name="Nat. Genet.">
        <title>Gene sequence and evolutionary conservation of human SMCY.</title>
        <authorList>
            <person name="Kent-First M.G."/>
            <person name="Maffitt M."/>
            <person name="Muallem A."/>
            <person name="Brisco P."/>
            <person name="Shultz J."/>
            <person name="Ekenberg S."/>
            <person name="Agulnik A.I."/>
            <person name="Agulnik S.I."/>
            <person name="Shramm D."/>
            <person name="Bavister B."/>
            <person name="Abdul-Mawgood A."/>
            <person name="Vandeberg J."/>
        </authorList>
    </citation>
    <scope>NUCLEOTIDE SEQUENCE [MRNA] (ISOFORM 1)</scope>
    <scope>VARIANT LEU-1186</scope>
</reference>
<reference key="2">
    <citation type="journal article" date="1996" name="Nat. Genet.">
        <authorList>
            <person name="Kent-First M.G."/>
            <person name="Maffitt M."/>
            <person name="Muallem A."/>
            <person name="Brisco P."/>
            <person name="Shultz J."/>
            <person name="Ekenberg S."/>
            <person name="Agulnik A.I."/>
            <person name="Agulnik S.I."/>
            <person name="Shramm D."/>
            <person name="Bavister B."/>
            <person name="Abdul-Mawgood A."/>
            <person name="Vandeberg J."/>
        </authorList>
    </citation>
    <scope>ERRATUM OF PUBMED:8841177</scope>
</reference>
<reference key="3">
    <citation type="journal article" date="1996" name="DNA Res.">
        <title>Prediction of the coding sequences of unidentified human genes. VI. The coding sequences of 80 new genes (KIAA0201-KIAA0280) deduced by analysis of cDNA clones from cell line KG-1 and brain.</title>
        <authorList>
            <person name="Nagase T."/>
            <person name="Seki N."/>
            <person name="Ishikawa K."/>
            <person name="Ohira M."/>
            <person name="Kawarabayasi Y."/>
            <person name="Ohara O."/>
            <person name="Tanaka A."/>
            <person name="Kotani H."/>
            <person name="Miyajima N."/>
            <person name="Nomura N."/>
        </authorList>
    </citation>
    <scope>NUCLEOTIDE SEQUENCE [LARGE SCALE MRNA] (ISOFORM 2)</scope>
    <source>
        <tissue>Bone marrow</tissue>
    </source>
</reference>
<reference key="4">
    <citation type="journal article" date="2000" name="Proc. Natl. Acad. Sci. U.S.A.">
        <title>Population genetic implications from sequence variation in four Y chromosome genes.</title>
        <authorList>
            <person name="Shen P."/>
            <person name="Wang F."/>
            <person name="Underhill P.A."/>
            <person name="Franco C."/>
            <person name="Yang W.-H."/>
            <person name="Roxas A."/>
            <person name="Sung R."/>
            <person name="Lin A.A."/>
            <person name="Hyman R.W."/>
            <person name="Vollrath D."/>
            <person name="Davis R.W."/>
            <person name="Cavalli-Sforza L.L."/>
            <person name="Oefner P.J."/>
        </authorList>
    </citation>
    <scope>NUCLEOTIDE SEQUENCE [GENOMIC DNA] (ISOFORM 1)</scope>
</reference>
<reference key="5">
    <citation type="journal article" date="2003" name="Nature">
        <title>The male-specific region of the human Y chromosome is a mosaic of discrete sequence classes.</title>
        <authorList>
            <person name="Skaletsky H."/>
            <person name="Kuroda-Kawaguchi T."/>
            <person name="Minx P.J."/>
            <person name="Cordum H.S."/>
            <person name="Hillier L.W."/>
            <person name="Brown L.G."/>
            <person name="Repping S."/>
            <person name="Pyntikova T."/>
            <person name="Ali J."/>
            <person name="Bieri T."/>
            <person name="Chinwalla A."/>
            <person name="Delehaunty A."/>
            <person name="Delehaunty K."/>
            <person name="Du H."/>
            <person name="Fewell G."/>
            <person name="Fulton L."/>
            <person name="Fulton R."/>
            <person name="Graves T.A."/>
            <person name="Hou S.-F."/>
            <person name="Latrielle P."/>
            <person name="Leonard S."/>
            <person name="Mardis E."/>
            <person name="Maupin R."/>
            <person name="McPherson J."/>
            <person name="Miner T."/>
            <person name="Nash W."/>
            <person name="Nguyen C."/>
            <person name="Ozersky P."/>
            <person name="Pepin K."/>
            <person name="Rock S."/>
            <person name="Rohlfing T."/>
            <person name="Scott K."/>
            <person name="Schultz B."/>
            <person name="Strong C."/>
            <person name="Tin-Wollam A."/>
            <person name="Yang S.-P."/>
            <person name="Waterston R.H."/>
            <person name="Wilson R.K."/>
            <person name="Rozen S."/>
            <person name="Page D.C."/>
        </authorList>
    </citation>
    <scope>NUCLEOTIDE SEQUENCE [LARGE SCALE GENOMIC DNA]</scope>
</reference>
<reference key="6">
    <citation type="submission" date="2005-07" db="EMBL/GenBank/DDBJ databases">
        <authorList>
            <person name="Mural R.J."/>
            <person name="Istrail S."/>
            <person name="Sutton G.G."/>
            <person name="Florea L."/>
            <person name="Halpern A.L."/>
            <person name="Mobarry C.M."/>
            <person name="Lippert R."/>
            <person name="Walenz B."/>
            <person name="Shatkay H."/>
            <person name="Dew I."/>
            <person name="Miller J.R."/>
            <person name="Flanigan M.J."/>
            <person name="Edwards N.J."/>
            <person name="Bolanos R."/>
            <person name="Fasulo D."/>
            <person name="Halldorsson B.V."/>
            <person name="Hannenhalli S."/>
            <person name="Turner R."/>
            <person name="Yooseph S."/>
            <person name="Lu F."/>
            <person name="Nusskern D.R."/>
            <person name="Shue B.C."/>
            <person name="Zheng X.H."/>
            <person name="Zhong F."/>
            <person name="Delcher A.L."/>
            <person name="Huson D.H."/>
            <person name="Kravitz S.A."/>
            <person name="Mouchard L."/>
            <person name="Reinert K."/>
            <person name="Remington K.A."/>
            <person name="Clark A.G."/>
            <person name="Waterman M.S."/>
            <person name="Eichler E.E."/>
            <person name="Adams M.D."/>
            <person name="Hunkapiller M.W."/>
            <person name="Myers E.W."/>
            <person name="Venter J.C."/>
        </authorList>
    </citation>
    <scope>NUCLEOTIDE SEQUENCE [LARGE SCALE GENOMIC DNA]</scope>
</reference>
<reference key="7">
    <citation type="journal article" date="2004" name="Genome Res.">
        <title>The status, quality, and expansion of the NIH full-length cDNA project: the Mammalian Gene Collection (MGC).</title>
        <authorList>
            <consortium name="The MGC Project Team"/>
        </authorList>
    </citation>
    <scope>NUCLEOTIDE SEQUENCE [LARGE SCALE MRNA] (ISOFORMS 1; 2 AND 3)</scope>
</reference>
<reference key="8">
    <citation type="journal article" date="1997" name="Mamm. Genome">
        <title>Analysis of mutation rates in the SMCY/SMCX genes shows that mammalian evolution is male driven.</title>
        <authorList>
            <person name="Agulnik A.I."/>
            <person name="Bishop C.E."/>
            <person name="Lerner J.L."/>
            <person name="Agulnik S.I."/>
            <person name="Solovyev V.V."/>
        </authorList>
    </citation>
    <scope>NUCLEOTIDE SEQUENCE [MRNA] OF 1-457 (ISOFORM 1)</scope>
</reference>
<reference key="9">
    <citation type="submission" date="1999-03" db="EMBL/GenBank/DDBJ databases">
        <title>Exon-intron structure of SMCX and SMCY genes in bovine and swine.</title>
        <authorList>
            <person name="Poloumienko A."/>
            <person name="Blecher S."/>
        </authorList>
    </citation>
    <scope>NUCLEOTIDE SEQUENCE [GENOMIC DNA] OF 1340-1478</scope>
    <source>
        <tissue>Blood</tissue>
    </source>
</reference>
<reference key="10">
    <citation type="journal article" date="2007" name="Cell">
        <title>Physical and functional association of a trimethyl H3K4 demethylase and Ring6a/MBLR, a polycomb-like protein.</title>
        <authorList>
            <person name="Lee M.G."/>
            <person name="Norman J."/>
            <person name="Shilatifard A."/>
            <person name="Shiekhattar R."/>
        </authorList>
    </citation>
    <scope>FUNCTION</scope>
    <scope>COFACTOR</scope>
    <scope>INTERACTION WITH PCGF6</scope>
    <scope>MUTAGENESIS OF HIS-534 AND GLU-536</scope>
</reference>
<reference key="11">
    <citation type="journal article" date="2007" name="Cell">
        <title>The X-linked mental retardation gene SMCX/JARID1C defines a family of histone H3 lysine 4 demethylases.</title>
        <authorList>
            <person name="Iwase S."/>
            <person name="Lan F."/>
            <person name="Bayliss P."/>
            <person name="de la Torre-Ubieta L."/>
            <person name="Huarte M."/>
            <person name="Qi H.H."/>
            <person name="Whetstine J.R."/>
            <person name="Bonni A."/>
            <person name="Roberts T.M."/>
            <person name="Shi Y."/>
        </authorList>
    </citation>
    <scope>FUNCTION</scope>
    <scope>CATALYTIC ACTIVITY</scope>
</reference>
<reference key="12">
    <citation type="journal article" date="2007" name="Nat. Struct. Mol. Biol.">
        <title>The trithorax-group gene in Drosophila little imaginal discs encodes a trimethylated histone H3 Lys4 demethylase.</title>
        <authorList>
            <person name="Eissenberg J.C."/>
            <person name="Lee M.G."/>
            <person name="Schneider J."/>
            <person name="Ilvarsonn A."/>
            <person name="Shiekhattar R."/>
            <person name="Shilatifard A."/>
        </authorList>
    </citation>
    <scope>FUNCTION</scope>
</reference>
<reference key="13">
    <citation type="journal article" date="2008" name="Genes Cells">
        <title>Spermatogenesis-specific association of SMCY and MSH5.</title>
        <authorList>
            <person name="Akimoto C."/>
            <person name="Kitagawa H."/>
            <person name="Matsumoto T."/>
            <person name="Kato S."/>
        </authorList>
    </citation>
    <scope>INTERACTION WITH MSH5</scope>
</reference>
<reference key="14">
    <citation type="journal article" date="2016" name="Cancer Res.">
        <title>JARID1D is a suppressor and prognostic marker of prostate cancer invasion and metastasis.</title>
        <authorList>
            <person name="Li N."/>
            <person name="Dhar S.S."/>
            <person name="Chen T.Y."/>
            <person name="Kan P.Y."/>
            <person name="Wei Y."/>
            <person name="Kim J.H."/>
            <person name="Chan C.H."/>
            <person name="Lin H.K."/>
            <person name="Hung M.C."/>
            <person name="Lee M.G."/>
        </authorList>
    </citation>
    <scope>FUNCTION</scope>
    <scope>TISSUE SPECIFICITY</scope>
</reference>
<reference key="15">
    <citation type="journal article" date="2016" name="Cell Chem. Biol.">
        <title>Structural Basis for KDM5A Histone Lysine Demethylase Inhibition by Diverse Compounds.</title>
        <authorList>
            <person name="Horton J.R."/>
            <person name="Liu X."/>
            <person name="Gale M."/>
            <person name="Wu L."/>
            <person name="Shanks J.R."/>
            <person name="Zhang X."/>
            <person name="Webber P.J."/>
            <person name="Bell J.S."/>
            <person name="Kales S.C."/>
            <person name="Mott B.T."/>
            <person name="Rai G."/>
            <person name="Jansen D.J."/>
            <person name="Henderson M.J."/>
            <person name="Urban D.J."/>
            <person name="Hall M.D."/>
            <person name="Simeonov A."/>
            <person name="Maloney D.J."/>
            <person name="Johns M.A."/>
            <person name="Fu H."/>
            <person name="Jadhav A."/>
            <person name="Vertino P.M."/>
            <person name="Yan Q."/>
            <person name="Cheng X."/>
        </authorList>
    </citation>
    <scope>BIOPHYSICOCHEMICAL PROPERTIES</scope>
    <scope>FUNCTION</scope>
    <scope>COFACTOR</scope>
</reference>
<reference key="16">
    <citation type="journal article" date="2016" name="Mol. Cell">
        <title>ZMYND8 reads the dual histone mark H3K4me1-H3K14ac to antagonize the expression of metastasis-linked genes.</title>
        <authorList>
            <person name="Li N."/>
            <person name="Li Y."/>
            <person name="Lv J."/>
            <person name="Zheng X."/>
            <person name="Wen H."/>
            <person name="Shen H."/>
            <person name="Zhu G."/>
            <person name="Chen T.Y."/>
            <person name="Dhar S.S."/>
            <person name="Kan P.Y."/>
            <person name="Wang Z."/>
            <person name="Shiekhattar R."/>
            <person name="Shi X."/>
            <person name="Lan F."/>
            <person name="Chen K."/>
            <person name="Li W."/>
            <person name="Li H."/>
            <person name="Lee M.G."/>
        </authorList>
    </citation>
    <scope>FUNCTION</scope>
    <scope>INTERACTION WITH ZMYND8</scope>
    <scope>SUBCELLULAR LOCATION</scope>
</reference>
<reference key="17">
    <citation type="journal article" date="2016" name="Proc. Natl. Acad. Sci. U.S.A.">
        <title>Resistance to docetaxel in prostate cancer is associated with androgen receptor activation and loss of KDM5D expression.</title>
        <authorList>
            <person name="Komura K."/>
            <person name="Jeong S.H."/>
            <person name="Hinohara K."/>
            <person name="Qu F."/>
            <person name="Wang X."/>
            <person name="Hiraki M."/>
            <person name="Azuma H."/>
            <person name="Lee G.S."/>
            <person name="Kantoff P.W."/>
            <person name="Sweeney C.J."/>
        </authorList>
    </citation>
    <scope>FUNCTION</scope>
    <scope>INTERACTION WITH AR</scope>
    <scope>SUBCELLULAR LOCATION</scope>
    <scope>INVOLVEMENT IN DOCETAXEL SENSITIVITY</scope>
</reference>
<reference key="18">
    <citation type="submission" date="2008-04" db="PDB data bank">
        <title>Solution structure of the PHD domain and of the ARID domain of JARID1D/SMCY protein.</title>
        <authorList>
            <consortium name="RIKEN structural genomics initiative (RSGI)"/>
        </authorList>
    </citation>
    <scope>STRUCTURE BY NMR OF 79-384</scope>
</reference>
<organism>
    <name type="scientific">Homo sapiens</name>
    <name type="common">Human</name>
    <dbReference type="NCBI Taxonomy" id="9606"/>
    <lineage>
        <taxon>Eukaryota</taxon>
        <taxon>Metazoa</taxon>
        <taxon>Chordata</taxon>
        <taxon>Craniata</taxon>
        <taxon>Vertebrata</taxon>
        <taxon>Euteleostomi</taxon>
        <taxon>Mammalia</taxon>
        <taxon>Eutheria</taxon>
        <taxon>Euarchontoglires</taxon>
        <taxon>Primates</taxon>
        <taxon>Haplorrhini</taxon>
        <taxon>Catarrhini</taxon>
        <taxon>Hominidae</taxon>
        <taxon>Homo</taxon>
    </lineage>
</organism>
<name>KDM5D_HUMAN</name>
<protein>
    <recommendedName>
        <fullName>Lysine-specific demethylase 5D</fullName>
        <ecNumber evidence="8">1.14.11.67</ecNumber>
    </recommendedName>
    <alternativeName>
        <fullName>Histocompatibility Y antigen</fullName>
        <shortName>H-Y</shortName>
    </alternativeName>
    <alternativeName>
        <fullName>Histone demethylase JARID1D</fullName>
    </alternativeName>
    <alternativeName>
        <fullName>Jumonji/ARID domain-containing protein 1D</fullName>
    </alternativeName>
    <alternativeName>
        <fullName>Protein SmcY</fullName>
    </alternativeName>
    <alternativeName>
        <fullName evidence="19">[histone H3]-trimethyl-L-lysine(4) demethylase 5D</fullName>
    </alternativeName>
</protein>
<keyword id="KW-0002">3D-structure</keyword>
<keyword id="KW-0025">Alternative splicing</keyword>
<keyword id="KW-0156">Chromatin regulator</keyword>
<keyword id="KW-0223">Dioxygenase</keyword>
<keyword id="KW-0408">Iron</keyword>
<keyword id="KW-1017">Isopeptide bond</keyword>
<keyword id="KW-0479">Metal-binding</keyword>
<keyword id="KW-0539">Nucleus</keyword>
<keyword id="KW-0560">Oxidoreductase</keyword>
<keyword id="KW-0597">Phosphoprotein</keyword>
<keyword id="KW-1267">Proteomics identification</keyword>
<keyword id="KW-1185">Reference proteome</keyword>
<keyword id="KW-0677">Repeat</keyword>
<keyword id="KW-0804">Transcription</keyword>
<keyword id="KW-0805">Transcription regulation</keyword>
<keyword id="KW-0832">Ubl conjugation</keyword>
<keyword id="KW-0862">Zinc</keyword>
<keyword id="KW-0863">Zinc-finger</keyword>
<sequence>MEPGCDEFLPPPECPVFEPSWAEFQDPLGYIAKIRPIAEKSGICKIRPPADWQPPFAVEVDNFRFTPRVQRLNELEAQTRVKLNYLDQIAKFWEIQGSSLKIPNVERKILDLYSLSKIVIEEGGYEAICKDRRWARVAQRLHYPPGKNIGSLLRSHYERIIYPYEMFQSGANHVQCNTHPFDNEVKDKEYKPHSIPLRQSVQPSKFSSYSRRAKRLQPDPEPTEEDIEKHPELKKLQIYGPGPKMMGLGLMAKDKDKTVHKKVTCPPTVTVKDEQSGGGNVSSTLLKQHLSLEPCTKTTMQLRKNHSSAQFIDSYICQVCSRGDEDDKLLFCDGCDDNYHIFCLLPPLPEIPRGIWRCPKCILAECKQPPEAFGFEQATQEYSLQSFGEMADSFKSDYFNMPVHMVPTELVEKEFWRLVSSIEEDVTVEYGADIHSKEFGSGFPVSNSKQNLSPEEKEYATSGWNLNVMPVLDQSVLCHINADISGMKVPWLYVGMVFSAFCWHIEDHWSYSINYLHWGEPKTWYGVPSLAAEHLEEVMKMLTPELFDSQPDLLHQLVTLMNPNTLMSHGVPVVRTNQCAGEFVITFPRAYHSGFNQGYNFAEAVNFCTADWLPAGRQCIEHYRRLRRYCVFSHEELICKMAAFPETLDLNLAVAVHKEMFIMVQEERRLRKALLEKGVTEAEREAFELLPDDERQCIKCKTTCFLSALACYDCPDGLVCLSHINDLCKCSSSRQYLRYRYTLDELPTMLHKLKIRAESFDTWANKVRVALEVEDGRKRSFEELRALESEARERRFPNSELLQRLKNCLSEVEACIAQVLGLVSGQVARMDTPQLTLTELRVLLEQMGSLPCAMHQIGDVKDVLEQVEAYQAEAREALATLPSSPGLLRSLLERGQQLGVEVPEAHQLQQQVEQAQWLDEVKQALAPSAHRGSLVIMQGLLVMGAKIASSPSVDKARAELQELLTIAERWEEKAHFCLEARQKHPPATLEAIIRETENIPVHLPNIQALKEALTKAQAWIADVDEIQNGDHYPCLDDLEGLVAVGRDLPVGLEELRQLELQVLTAHSWREKASKTFLKKNSCYTLLEVLCPCADAGSDSTKRSRWMEKALGLYQCDTELLGLSAQDLRDPGSVIVAFKEGEQKEKEGILQLRRTNSAKPSPLAPSLMASSPTSICVCGQVPAGVGVLQCDLCQDWFHGQCVSVPHLLTSPKPSLTSSPLLAWWEWDTKFLCPLCMRSRRPRLETILALLVALQRLPVRLPEGEALQCLTERAIGWQDRARKALASEDVTALLRQLAELRQQLQAKPRPEEASVYTSATACDPIREGSGNNISKVQGLLENGDSVTSPENMAPGKGSDLELLSSLLPQLTGPVLELPEAIRAPLEELMMEGDLLEVTLDENHSIWQLLQAGQPPDLDRIRTLLELEKFEHQGSRTRSRALERRRRRQKVDQGRNVENLVQQELQSKRARSSGIMSQVGREEEHYQEKADRENMFLTPSTDHSPFLKGNQNSLQHKDSGSSAACPSLMPLLQLSYSDEQQL</sequence>
<evidence type="ECO:0000250" key="1">
    <source>
        <dbReference type="UniProtKB" id="P29375"/>
    </source>
</evidence>
<evidence type="ECO:0000250" key="2">
    <source>
        <dbReference type="UniProtKB" id="P41229"/>
    </source>
</evidence>
<evidence type="ECO:0000255" key="3">
    <source>
        <dbReference type="PROSITE-ProRule" id="PRU00146"/>
    </source>
</evidence>
<evidence type="ECO:0000255" key="4">
    <source>
        <dbReference type="PROSITE-ProRule" id="PRU00355"/>
    </source>
</evidence>
<evidence type="ECO:0000255" key="5">
    <source>
        <dbReference type="PROSITE-ProRule" id="PRU00537"/>
    </source>
</evidence>
<evidence type="ECO:0000255" key="6">
    <source>
        <dbReference type="PROSITE-ProRule" id="PRU00538"/>
    </source>
</evidence>
<evidence type="ECO:0000256" key="7">
    <source>
        <dbReference type="SAM" id="MobiDB-lite"/>
    </source>
</evidence>
<evidence type="ECO:0000269" key="8">
    <source>
    </source>
</evidence>
<evidence type="ECO:0000269" key="9">
    <source>
    </source>
</evidence>
<evidence type="ECO:0000269" key="10">
    <source>
    </source>
</evidence>
<evidence type="ECO:0000269" key="11">
    <source>
    </source>
</evidence>
<evidence type="ECO:0000269" key="12">
    <source>
    </source>
</evidence>
<evidence type="ECO:0000269" key="13">
    <source>
    </source>
</evidence>
<evidence type="ECO:0000269" key="14">
    <source>
    </source>
</evidence>
<evidence type="ECO:0000269" key="15">
    <source>
    </source>
</evidence>
<evidence type="ECO:0000269" key="16">
    <source>
    </source>
</evidence>
<evidence type="ECO:0000303" key="17">
    <source>
    </source>
</evidence>
<evidence type="ECO:0000303" key="18">
    <source>
    </source>
</evidence>
<evidence type="ECO:0000305" key="19"/>
<evidence type="ECO:0007829" key="20">
    <source>
        <dbReference type="PDB" id="2E6R"/>
    </source>
</evidence>
<evidence type="ECO:0007829" key="21">
    <source>
        <dbReference type="PDB" id="2YQE"/>
    </source>
</evidence>
<dbReference type="EC" id="1.14.11.67" evidence="8"/>
<dbReference type="EMBL" id="U52191">
    <property type="protein sequence ID" value="AAC50806.1"/>
    <property type="molecule type" value="mRNA"/>
</dbReference>
<dbReference type="EMBL" id="D87072">
    <property type="protein sequence ID" value="BAA13241.2"/>
    <property type="status" value="ALT_INIT"/>
    <property type="molecule type" value="mRNA"/>
</dbReference>
<dbReference type="EMBL" id="AF273841">
    <property type="protein sequence ID" value="AAG00951.1"/>
    <property type="molecule type" value="Genomic_DNA"/>
</dbReference>
<dbReference type="EMBL" id="AC010889">
    <property type="status" value="NOT_ANNOTATED_CDS"/>
    <property type="molecule type" value="Genomic_DNA"/>
</dbReference>
<dbReference type="EMBL" id="CH471202">
    <property type="protein sequence ID" value="EAW54663.1"/>
    <property type="molecule type" value="Genomic_DNA"/>
</dbReference>
<dbReference type="EMBL" id="BC132721">
    <property type="protein sequence ID" value="AAI32722.1"/>
    <property type="molecule type" value="mRNA"/>
</dbReference>
<dbReference type="EMBL" id="BC144102">
    <property type="protein sequence ID" value="AAI44103.1"/>
    <property type="molecule type" value="mRNA"/>
</dbReference>
<dbReference type="EMBL" id="BC146767">
    <property type="protein sequence ID" value="AAI46768.1"/>
    <property type="molecule type" value="mRNA"/>
</dbReference>
<dbReference type="EMBL" id="U52365">
    <property type="protein sequence ID" value="AAC51135.1"/>
    <property type="molecule type" value="mRNA"/>
</dbReference>
<dbReference type="EMBL" id="AF134849">
    <property type="protein sequence ID" value="AAK27839.1"/>
    <property type="molecule type" value="Genomic_DNA"/>
</dbReference>
<dbReference type="CCDS" id="CCDS14794.1">
    <molecule id="Q9BY66-1"/>
</dbReference>
<dbReference type="CCDS" id="CCDS55554.1">
    <molecule id="Q9BY66-2"/>
</dbReference>
<dbReference type="CCDS" id="CCDS55555.1">
    <molecule id="Q9BY66-3"/>
</dbReference>
<dbReference type="RefSeq" id="NP_001140177.1">
    <molecule id="Q9BY66-3"/>
    <property type="nucleotide sequence ID" value="NM_001146705.2"/>
</dbReference>
<dbReference type="RefSeq" id="NP_001140178.1">
    <molecule id="Q9BY66-2"/>
    <property type="nucleotide sequence ID" value="NM_001146706.2"/>
</dbReference>
<dbReference type="RefSeq" id="NP_004644.2">
    <molecule id="Q9BY66-1"/>
    <property type="nucleotide sequence ID" value="NM_004653.4"/>
</dbReference>
<dbReference type="PDB" id="2E6R">
    <property type="method" value="NMR"/>
    <property type="chains" value="A=306-384"/>
</dbReference>
<dbReference type="PDB" id="2YQE">
    <property type="method" value="NMR"/>
    <property type="chains" value="A=79-171"/>
</dbReference>
<dbReference type="PDBsum" id="2E6R"/>
<dbReference type="PDBsum" id="2YQE"/>
<dbReference type="BMRB" id="Q9BY66"/>
<dbReference type="SMR" id="Q9BY66"/>
<dbReference type="BioGRID" id="113891">
    <property type="interactions" value="8"/>
</dbReference>
<dbReference type="FunCoup" id="Q9BY66">
    <property type="interactions" value="915"/>
</dbReference>
<dbReference type="IntAct" id="Q9BY66">
    <property type="interactions" value="6"/>
</dbReference>
<dbReference type="STRING" id="9606.ENSP00000322408"/>
<dbReference type="BindingDB" id="Q9BY66"/>
<dbReference type="ChEMBL" id="CHEMBL5169191"/>
<dbReference type="DrugBank" id="DB00126">
    <property type="generic name" value="Ascorbic acid"/>
</dbReference>
<dbReference type="iPTMnet" id="Q9BY66"/>
<dbReference type="PhosphoSitePlus" id="Q9BY66"/>
<dbReference type="BioMuta" id="KDM5D"/>
<dbReference type="DMDM" id="17368706"/>
<dbReference type="jPOST" id="Q9BY66"/>
<dbReference type="MassIVE" id="Q9BY66"/>
<dbReference type="PeptideAtlas" id="Q9BY66"/>
<dbReference type="ProteomicsDB" id="79591">
    <molecule id="Q9BY66-1"/>
</dbReference>
<dbReference type="ProteomicsDB" id="79592">
    <molecule id="Q9BY66-2"/>
</dbReference>
<dbReference type="ProteomicsDB" id="79593">
    <molecule id="Q9BY66-3"/>
</dbReference>
<dbReference type="Pumba" id="Q9BY66"/>
<dbReference type="ABCD" id="Q9BY66">
    <property type="antibodies" value="1 sequenced antibody"/>
</dbReference>
<dbReference type="Antibodypedia" id="21879">
    <property type="antibodies" value="55 antibodies from 25 providers"/>
</dbReference>
<dbReference type="DNASU" id="8284"/>
<dbReference type="Ensembl" id="ENST00000317961.9">
    <molecule id="Q9BY66-1"/>
    <property type="protein sequence ID" value="ENSP00000322408.4"/>
    <property type="gene ID" value="ENSG00000012817.16"/>
</dbReference>
<dbReference type="Ensembl" id="ENST00000382806.6">
    <molecule id="Q9BY66-2"/>
    <property type="protein sequence ID" value="ENSP00000372256.2"/>
    <property type="gene ID" value="ENSG00000012817.16"/>
</dbReference>
<dbReference type="Ensembl" id="ENST00000541639.5">
    <molecule id="Q9BY66-3"/>
    <property type="protein sequence ID" value="ENSP00000444293.1"/>
    <property type="gene ID" value="ENSG00000012817.16"/>
</dbReference>
<dbReference type="GeneID" id="8284"/>
<dbReference type="KEGG" id="hsa:8284"/>
<dbReference type="MANE-Select" id="ENST00000317961.9">
    <property type="protein sequence ID" value="ENSP00000322408.4"/>
    <property type="RefSeq nucleotide sequence ID" value="NM_004653.5"/>
    <property type="RefSeq protein sequence ID" value="NP_004644.2"/>
</dbReference>
<dbReference type="UCSC" id="uc004fug.4">
    <molecule id="Q9BY66-1"/>
    <property type="organism name" value="human"/>
</dbReference>
<dbReference type="AGR" id="HGNC:11115"/>
<dbReference type="CTD" id="8284"/>
<dbReference type="DisGeNET" id="8284"/>
<dbReference type="GeneCards" id="KDM5D"/>
<dbReference type="GeneReviews" id="KDM5D"/>
<dbReference type="HGNC" id="HGNC:11115">
    <property type="gene designation" value="KDM5D"/>
</dbReference>
<dbReference type="HPA" id="ENSG00000012817">
    <property type="expression patterns" value="Low tissue specificity"/>
</dbReference>
<dbReference type="MalaCards" id="KDM5D"/>
<dbReference type="MIM" id="426000">
    <property type="type" value="gene"/>
</dbReference>
<dbReference type="neXtProt" id="NX_Q9BY66"/>
<dbReference type="OpenTargets" id="ENSG00000012817"/>
<dbReference type="PharmGKB" id="PA35965"/>
<dbReference type="VEuPathDB" id="HostDB:ENSG00000012817"/>
<dbReference type="GeneTree" id="ENSGT00940000161236"/>
<dbReference type="HOGENOM" id="CLU_000991_2_2_1"/>
<dbReference type="InParanoid" id="Q9BY66"/>
<dbReference type="OMA" id="SAVNCKC"/>
<dbReference type="PAN-GO" id="Q9BY66">
    <property type="GO annotations" value="3 GO annotations based on evolutionary models"/>
</dbReference>
<dbReference type="PhylomeDB" id="Q9BY66"/>
<dbReference type="TreeFam" id="TF106476"/>
<dbReference type="BioCyc" id="MetaCyc:ENSG00000012817-MONOMER"/>
<dbReference type="BRENDA" id="1.14.11.67">
    <property type="organism ID" value="2681"/>
</dbReference>
<dbReference type="PathwayCommons" id="Q9BY66"/>
<dbReference type="Reactome" id="R-HSA-3214842">
    <property type="pathway name" value="HDMs demethylate histones"/>
</dbReference>
<dbReference type="SignaLink" id="Q9BY66"/>
<dbReference type="SIGNOR" id="Q9BY66"/>
<dbReference type="BioGRID-ORCS" id="8284">
    <property type="hits" value="14 hits in 807 CRISPR screens"/>
</dbReference>
<dbReference type="ChiTaRS" id="KDM5D">
    <property type="organism name" value="human"/>
</dbReference>
<dbReference type="EvolutionaryTrace" id="Q9BY66"/>
<dbReference type="GeneWiki" id="JARID1D"/>
<dbReference type="GenomeRNAi" id="8284"/>
<dbReference type="Pharos" id="Q9BY66">
    <property type="development level" value="Tbio"/>
</dbReference>
<dbReference type="PRO" id="PR:Q9BY66"/>
<dbReference type="Proteomes" id="UP000005640">
    <property type="component" value="Chromosome Y"/>
</dbReference>
<dbReference type="RNAct" id="Q9BY66">
    <property type="molecule type" value="protein"/>
</dbReference>
<dbReference type="Bgee" id="ENSG00000012817">
    <property type="expression patterns" value="Expressed in apex of heart and 190 other cell types or tissues"/>
</dbReference>
<dbReference type="ExpressionAtlas" id="Q9BY66">
    <property type="expression patterns" value="baseline and differential"/>
</dbReference>
<dbReference type="GO" id="GO:0000785">
    <property type="term" value="C:chromatin"/>
    <property type="evidence" value="ECO:0000318"/>
    <property type="project" value="GO_Central"/>
</dbReference>
<dbReference type="GO" id="GO:0001650">
    <property type="term" value="C:fibrillar center"/>
    <property type="evidence" value="ECO:0000314"/>
    <property type="project" value="HPA"/>
</dbReference>
<dbReference type="GO" id="GO:0005654">
    <property type="term" value="C:nucleoplasm"/>
    <property type="evidence" value="ECO:0000304"/>
    <property type="project" value="Reactome"/>
</dbReference>
<dbReference type="GO" id="GO:0005634">
    <property type="term" value="C:nucleus"/>
    <property type="evidence" value="ECO:0000318"/>
    <property type="project" value="GO_Central"/>
</dbReference>
<dbReference type="GO" id="GO:0003677">
    <property type="term" value="F:DNA binding"/>
    <property type="evidence" value="ECO:0007669"/>
    <property type="project" value="InterPro"/>
</dbReference>
<dbReference type="GO" id="GO:0032452">
    <property type="term" value="F:histone demethylase activity"/>
    <property type="evidence" value="ECO:0000304"/>
    <property type="project" value="Reactome"/>
</dbReference>
<dbReference type="GO" id="GO:0032453">
    <property type="term" value="F:histone H3K4 demethylase activity"/>
    <property type="evidence" value="ECO:0000314"/>
    <property type="project" value="MGI"/>
</dbReference>
<dbReference type="GO" id="GO:0034647">
    <property type="term" value="F:histone H3K4me/H3K4me2/H3K4me3 demethylase activity"/>
    <property type="evidence" value="ECO:0000318"/>
    <property type="project" value="GO_Central"/>
</dbReference>
<dbReference type="GO" id="GO:0050681">
    <property type="term" value="F:nuclear androgen receptor binding"/>
    <property type="evidence" value="ECO:0000314"/>
    <property type="project" value="UniProtKB"/>
</dbReference>
<dbReference type="GO" id="GO:0008270">
    <property type="term" value="F:zinc ion binding"/>
    <property type="evidence" value="ECO:0007669"/>
    <property type="project" value="UniProtKB-KW"/>
</dbReference>
<dbReference type="GO" id="GO:0006338">
    <property type="term" value="P:chromatin remodeling"/>
    <property type="evidence" value="ECO:0000318"/>
    <property type="project" value="GO_Central"/>
</dbReference>
<dbReference type="GO" id="GO:0060765">
    <property type="term" value="P:regulation of androgen receptor signaling pathway"/>
    <property type="evidence" value="ECO:0000315"/>
    <property type="project" value="UniProtKB"/>
</dbReference>
<dbReference type="GO" id="GO:0006355">
    <property type="term" value="P:regulation of DNA-templated transcription"/>
    <property type="evidence" value="ECO:0000318"/>
    <property type="project" value="GO_Central"/>
</dbReference>
<dbReference type="GO" id="GO:0002457">
    <property type="term" value="P:T cell antigen processing and presentation"/>
    <property type="evidence" value="ECO:0007669"/>
    <property type="project" value="Ensembl"/>
</dbReference>
<dbReference type="CDD" id="cd16875">
    <property type="entry name" value="ARID_KDM5C_5D"/>
    <property type="match status" value="1"/>
</dbReference>
<dbReference type="CDD" id="cd15604">
    <property type="entry name" value="PHD1_KDM5C_5D"/>
    <property type="match status" value="1"/>
</dbReference>
<dbReference type="CDD" id="cd15608">
    <property type="entry name" value="PHD2_KDM5C_5D"/>
    <property type="match status" value="1"/>
</dbReference>
<dbReference type="FunFam" id="3.30.40.10:FF:000072">
    <property type="entry name" value="lysine-specific demethylase 5C isoform X2"/>
    <property type="match status" value="1"/>
</dbReference>
<dbReference type="FunFam" id="3.30.40.10:FF:000651">
    <property type="entry name" value="Lysine-specific demethylase 5D"/>
    <property type="match status" value="1"/>
</dbReference>
<dbReference type="FunFam" id="2.60.120.650:FF:000035">
    <property type="entry name" value="PHD transcription factor Rum1"/>
    <property type="match status" value="1"/>
</dbReference>
<dbReference type="FunFam" id="1.10.150.60:FF:000001">
    <property type="entry name" value="Putative lysine-specific demethylase 5b"/>
    <property type="match status" value="1"/>
</dbReference>
<dbReference type="FunFam" id="2.60.120.650:FF:000001">
    <property type="entry name" value="Putative lysine-specific demethylase 5b"/>
    <property type="match status" value="1"/>
</dbReference>
<dbReference type="Gene3D" id="1.10.150.60">
    <property type="entry name" value="ARID DNA-binding domain"/>
    <property type="match status" value="1"/>
</dbReference>
<dbReference type="Gene3D" id="2.60.120.650">
    <property type="entry name" value="Cupin"/>
    <property type="match status" value="1"/>
</dbReference>
<dbReference type="Gene3D" id="3.30.40.10">
    <property type="entry name" value="Zinc/RING finger domain, C3HC4 (zinc finger)"/>
    <property type="match status" value="2"/>
</dbReference>
<dbReference type="InterPro" id="IPR001606">
    <property type="entry name" value="ARID_dom"/>
</dbReference>
<dbReference type="InterPro" id="IPR036431">
    <property type="entry name" value="ARID_dom_sf"/>
</dbReference>
<dbReference type="InterPro" id="IPR003347">
    <property type="entry name" value="JmjC_dom"/>
</dbReference>
<dbReference type="InterPro" id="IPR003349">
    <property type="entry name" value="JmjN"/>
</dbReference>
<dbReference type="InterPro" id="IPR048615">
    <property type="entry name" value="KDM5_C-hel"/>
</dbReference>
<dbReference type="InterPro" id="IPR013637">
    <property type="entry name" value="Lys_sp_deMease-like_dom"/>
</dbReference>
<dbReference type="InterPro" id="IPR019786">
    <property type="entry name" value="Zinc_finger_PHD-type_CS"/>
</dbReference>
<dbReference type="InterPro" id="IPR004198">
    <property type="entry name" value="Znf_C5HC2"/>
</dbReference>
<dbReference type="InterPro" id="IPR011011">
    <property type="entry name" value="Znf_FYVE_PHD"/>
</dbReference>
<dbReference type="InterPro" id="IPR001965">
    <property type="entry name" value="Znf_PHD"/>
</dbReference>
<dbReference type="InterPro" id="IPR019787">
    <property type="entry name" value="Znf_PHD-finger"/>
</dbReference>
<dbReference type="InterPro" id="IPR013083">
    <property type="entry name" value="Znf_RING/FYVE/PHD"/>
</dbReference>
<dbReference type="PANTHER" id="PTHR10694">
    <property type="entry name" value="LYSINE-SPECIFIC DEMETHYLASE"/>
    <property type="match status" value="1"/>
</dbReference>
<dbReference type="PANTHER" id="PTHR10694:SF84">
    <property type="entry name" value="LYSINE-SPECIFIC DEMETHYLASE 5D"/>
    <property type="match status" value="1"/>
</dbReference>
<dbReference type="Pfam" id="PF01388">
    <property type="entry name" value="ARID"/>
    <property type="match status" value="1"/>
</dbReference>
<dbReference type="Pfam" id="PF02373">
    <property type="entry name" value="JmjC"/>
    <property type="match status" value="1"/>
</dbReference>
<dbReference type="Pfam" id="PF02375">
    <property type="entry name" value="JmjN"/>
    <property type="match status" value="1"/>
</dbReference>
<dbReference type="Pfam" id="PF21323">
    <property type="entry name" value="KDM5_C-hel"/>
    <property type="match status" value="1"/>
</dbReference>
<dbReference type="Pfam" id="PF00628">
    <property type="entry name" value="PHD"/>
    <property type="match status" value="1"/>
</dbReference>
<dbReference type="Pfam" id="PF08429">
    <property type="entry name" value="PLU-1"/>
    <property type="match status" value="1"/>
</dbReference>
<dbReference type="Pfam" id="PF02928">
    <property type="entry name" value="zf-C5HC2"/>
    <property type="match status" value="1"/>
</dbReference>
<dbReference type="SMART" id="SM01014">
    <property type="entry name" value="ARID"/>
    <property type="match status" value="1"/>
</dbReference>
<dbReference type="SMART" id="SM00501">
    <property type="entry name" value="BRIGHT"/>
    <property type="match status" value="1"/>
</dbReference>
<dbReference type="SMART" id="SM00558">
    <property type="entry name" value="JmjC"/>
    <property type="match status" value="1"/>
</dbReference>
<dbReference type="SMART" id="SM00545">
    <property type="entry name" value="JmjN"/>
    <property type="match status" value="1"/>
</dbReference>
<dbReference type="SMART" id="SM00249">
    <property type="entry name" value="PHD"/>
    <property type="match status" value="2"/>
</dbReference>
<dbReference type="SUPFAM" id="SSF46774">
    <property type="entry name" value="ARID-like"/>
    <property type="match status" value="1"/>
</dbReference>
<dbReference type="SUPFAM" id="SSF51197">
    <property type="entry name" value="Clavaminate synthase-like"/>
    <property type="match status" value="1"/>
</dbReference>
<dbReference type="SUPFAM" id="SSF57903">
    <property type="entry name" value="FYVE/PHD zinc finger"/>
    <property type="match status" value="2"/>
</dbReference>
<dbReference type="PROSITE" id="PS51011">
    <property type="entry name" value="ARID"/>
    <property type="match status" value="1"/>
</dbReference>
<dbReference type="PROSITE" id="PS51184">
    <property type="entry name" value="JMJC"/>
    <property type="match status" value="1"/>
</dbReference>
<dbReference type="PROSITE" id="PS51183">
    <property type="entry name" value="JMJN"/>
    <property type="match status" value="1"/>
</dbReference>
<dbReference type="PROSITE" id="PS01359">
    <property type="entry name" value="ZF_PHD_1"/>
    <property type="match status" value="2"/>
</dbReference>
<dbReference type="PROSITE" id="PS50016">
    <property type="entry name" value="ZF_PHD_2"/>
    <property type="match status" value="1"/>
</dbReference>
<feature type="chain" id="PRO_0000200588" description="Lysine-specific demethylase 5D">
    <location>
        <begin position="1"/>
        <end position="1539"/>
    </location>
</feature>
<feature type="domain" description="JmjN" evidence="5">
    <location>
        <begin position="14"/>
        <end position="55"/>
    </location>
</feature>
<feature type="domain" description="ARID" evidence="4">
    <location>
        <begin position="79"/>
        <end position="169"/>
    </location>
</feature>
<feature type="domain" description="JmjC" evidence="6">
    <location>
        <begin position="458"/>
        <end position="624"/>
    </location>
</feature>
<feature type="zinc finger region" description="PHD-type 1" evidence="3">
    <location>
        <begin position="316"/>
        <end position="362"/>
    </location>
</feature>
<feature type="zinc finger region" description="C5HC2" evidence="1">
    <location>
        <begin position="697"/>
        <end position="749"/>
    </location>
</feature>
<feature type="zinc finger region" description="PHD-type 2" evidence="3">
    <location>
        <begin position="1174"/>
        <end position="1235"/>
    </location>
</feature>
<feature type="region of interest" description="Disordered" evidence="7">
    <location>
        <begin position="192"/>
        <end position="228"/>
    </location>
</feature>
<feature type="region of interest" description="Disordered" evidence="7">
    <location>
        <begin position="1429"/>
        <end position="1521"/>
    </location>
</feature>
<feature type="compositionally biased region" description="Polar residues" evidence="7">
    <location>
        <begin position="197"/>
        <end position="210"/>
    </location>
</feature>
<feature type="compositionally biased region" description="Basic residues" evidence="7">
    <location>
        <begin position="1432"/>
        <end position="1446"/>
    </location>
</feature>
<feature type="compositionally biased region" description="Basic and acidic residues" evidence="7">
    <location>
        <begin position="1477"/>
        <end position="1491"/>
    </location>
</feature>
<feature type="compositionally biased region" description="Polar residues" evidence="7">
    <location>
        <begin position="1494"/>
        <end position="1521"/>
    </location>
</feature>
<feature type="binding site" evidence="1">
    <location>
        <position position="430"/>
    </location>
    <ligand>
        <name>2-oxoglutarate</name>
        <dbReference type="ChEBI" id="CHEBI:16810"/>
    </ligand>
</feature>
<feature type="binding site" evidence="6">
    <location>
        <position position="504"/>
    </location>
    <ligand>
        <name>Fe cation</name>
        <dbReference type="ChEBI" id="CHEBI:24875"/>
        <note>catalytic</note>
    </ligand>
</feature>
<feature type="binding site" evidence="1">
    <location>
        <position position="506"/>
    </location>
    <ligand>
        <name>Fe cation</name>
        <dbReference type="ChEBI" id="CHEBI:24875"/>
        <note>catalytic</note>
    </ligand>
</feature>
<feature type="binding site" evidence="1">
    <location>
        <position position="512"/>
    </location>
    <ligand>
        <name>2-oxoglutarate</name>
        <dbReference type="ChEBI" id="CHEBI:16810"/>
    </ligand>
</feature>
<feature type="binding site" evidence="1">
    <location>
        <position position="514"/>
    </location>
    <ligand>
        <name>2-oxoglutarate</name>
        <dbReference type="ChEBI" id="CHEBI:16810"/>
    </ligand>
</feature>
<feature type="binding site" evidence="1">
    <location>
        <position position="522"/>
    </location>
    <ligand>
        <name>2-oxoglutarate</name>
        <dbReference type="ChEBI" id="CHEBI:16810"/>
    </ligand>
</feature>
<feature type="binding site" evidence="6">
    <location>
        <position position="592"/>
    </location>
    <ligand>
        <name>Fe cation</name>
        <dbReference type="ChEBI" id="CHEBI:24875"/>
        <note>catalytic</note>
    </ligand>
</feature>
<feature type="modified residue" description="Phosphoserine" evidence="2">
    <location>
        <position position="291"/>
    </location>
</feature>
<feature type="modified residue" description="Phosphoserine" evidence="2">
    <location>
        <position position="307"/>
    </location>
</feature>
<feature type="modified residue" description="Phosphoserine" evidence="2">
    <location>
        <position position="884"/>
    </location>
</feature>
<feature type="modified residue" description="Phosphoserine" evidence="2">
    <location>
        <position position="1346"/>
    </location>
</feature>
<feature type="cross-link" description="Glycyl lysine isopeptide (Lys-Gly) (interchain with G-Cter in SUMO2)" evidence="2">
    <location>
        <position position="205"/>
    </location>
</feature>
<feature type="cross-link" description="Glycyl lysine isopeptide (Lys-Gly) (interchain with G-Cter in SUMO2)" evidence="2">
    <location>
        <position position="229"/>
    </location>
</feature>
<feature type="cross-link" description="Glycyl lysine isopeptide (Lys-Gly) (interchain with G-Cter in SUMO2)" evidence="2">
    <location>
        <position position="244"/>
    </location>
</feature>
<feature type="cross-link" description="Glycyl lysine isopeptide (Lys-Gly) (interchain with G-Cter in SUMO2)" evidence="2">
    <location>
        <position position="272"/>
    </location>
</feature>
<feature type="splice variant" id="VSP_000317" description="In isoform 2." evidence="17 18">
    <location>
        <begin position="118"/>
        <end position="174"/>
    </location>
</feature>
<feature type="splice variant" id="VSP_043320" description="In isoform 3." evidence="17">
    <original>K</original>
    <variation>KRQSLTVLTRLISSFWAQAVLPPWPPKVLGLQ</variation>
    <location>
        <position position="457"/>
    </location>
</feature>
<feature type="sequence variant" id="VAR_032991" description="In dbSNP:rs1050807." evidence="16">
    <original>V</original>
    <variation>L</variation>
    <location>
        <position position="1186"/>
    </location>
</feature>
<feature type="mutagenesis site" description="Abolishes enzymatic activity; when associated with A-536." evidence="9">
    <original>H</original>
    <variation>A</variation>
    <location>
        <position position="534"/>
    </location>
</feature>
<feature type="mutagenesis site" description="Abolishes enzymatic activity; when associated with A-534." evidence="9">
    <original>E</original>
    <variation>A</variation>
    <location>
        <position position="536"/>
    </location>
</feature>
<feature type="sequence conflict" description="In Ref. 1; AAC50806 and 8; AAC51135." evidence="19" ref="1 8">
    <original>D</original>
    <variation>N</variation>
    <location>
        <position position="327"/>
    </location>
</feature>
<feature type="sequence conflict" description="In Ref. 1; AAC50806." evidence="19" ref="1">
    <original>S</original>
    <variation>F</variation>
    <location>
        <position position="1285"/>
    </location>
</feature>
<feature type="sequence conflict" description="In Ref. 9; AAK27839." evidence="19" ref="9">
    <original>P</original>
    <variation>L</variation>
    <location>
        <position position="1352"/>
    </location>
</feature>
<feature type="sequence conflict" description="In Ref. 1; AAC50806." evidence="19" ref="1">
    <original>D</original>
    <variation>G</variation>
    <location>
        <position position="1391"/>
    </location>
</feature>
<feature type="helix" evidence="21">
    <location>
        <begin position="81"/>
        <end position="96"/>
    </location>
</feature>
<feature type="strand" evidence="21">
    <location>
        <begin position="106"/>
        <end position="109"/>
    </location>
</feature>
<feature type="helix" evidence="21">
    <location>
        <begin position="112"/>
        <end position="122"/>
    </location>
</feature>
<feature type="helix" evidence="21">
    <location>
        <begin position="125"/>
        <end position="130"/>
    </location>
</feature>
<feature type="turn" evidence="21">
    <location>
        <begin position="131"/>
        <end position="133"/>
    </location>
</feature>
<feature type="helix" evidence="21">
    <location>
        <begin position="134"/>
        <end position="140"/>
    </location>
</feature>
<feature type="helix" evidence="21">
    <location>
        <begin position="149"/>
        <end position="159"/>
    </location>
</feature>
<feature type="helix" evidence="21">
    <location>
        <begin position="161"/>
        <end position="167"/>
    </location>
</feature>
<feature type="strand" evidence="20">
    <location>
        <begin position="318"/>
        <end position="320"/>
    </location>
</feature>
<feature type="helix" evidence="20">
    <location>
        <begin position="324"/>
        <end position="328"/>
    </location>
</feature>
<feature type="turn" evidence="20">
    <location>
        <begin position="333"/>
        <end position="335"/>
    </location>
</feature>
<feature type="strand" evidence="20">
    <location>
        <begin position="341"/>
        <end position="346"/>
    </location>
</feature>
<feature type="helix" evidence="20">
    <location>
        <begin position="359"/>
        <end position="366"/>
    </location>
</feature>
<proteinExistence type="evidence at protein level"/>